<accession>O77475</accession>
<keyword id="KW-1003">Cell membrane</keyword>
<keyword id="KW-0333">Golgi apparatus</keyword>
<keyword id="KW-0444">Lipid biosynthesis</keyword>
<keyword id="KW-0443">Lipid metabolism</keyword>
<keyword id="KW-0472">Membrane</keyword>
<keyword id="KW-1208">Phospholipid metabolism</keyword>
<keyword id="KW-1185">Reference proteome</keyword>
<keyword id="KW-0746">Sphingolipid metabolism</keyword>
<keyword id="KW-0808">Transferase</keyword>
<keyword id="KW-0812">Transmembrane</keyword>
<keyword id="KW-1133">Transmembrane helix</keyword>
<name>CPESY_DROME</name>
<reference evidence="9" key="1">
    <citation type="journal article" date="1999" name="Genomics">
        <title>The Drosophila melanogaster 60A chromosomal division is extremely dense with functional genes: their sequences, genomic organization, and expression.</title>
        <authorList>
            <person name="Lukacsovich T."/>
            <person name="Asztalos Z."/>
            <person name="Juni N."/>
            <person name="Awano W."/>
            <person name="Yamamoto D."/>
        </authorList>
    </citation>
    <scope>NUCLEOTIDE SEQUENCE [GENOMIC DNA / MRNA]</scope>
</reference>
<reference evidence="7" key="2">
    <citation type="journal article" date="2000" name="Science">
        <title>The genome sequence of Drosophila melanogaster.</title>
        <authorList>
            <person name="Adams M.D."/>
            <person name="Celniker S.E."/>
            <person name="Holt R.A."/>
            <person name="Evans C.A."/>
            <person name="Gocayne J.D."/>
            <person name="Amanatides P.G."/>
            <person name="Scherer S.E."/>
            <person name="Li P.W."/>
            <person name="Hoskins R.A."/>
            <person name="Galle R.F."/>
            <person name="George R.A."/>
            <person name="Lewis S.E."/>
            <person name="Richards S."/>
            <person name="Ashburner M."/>
            <person name="Henderson S.N."/>
            <person name="Sutton G.G."/>
            <person name="Wortman J.R."/>
            <person name="Yandell M.D."/>
            <person name="Zhang Q."/>
            <person name="Chen L.X."/>
            <person name="Brandon R.C."/>
            <person name="Rogers Y.-H.C."/>
            <person name="Blazej R.G."/>
            <person name="Champe M."/>
            <person name="Pfeiffer B.D."/>
            <person name="Wan K.H."/>
            <person name="Doyle C."/>
            <person name="Baxter E.G."/>
            <person name="Helt G."/>
            <person name="Nelson C.R."/>
            <person name="Miklos G.L.G."/>
            <person name="Abril J.F."/>
            <person name="Agbayani A."/>
            <person name="An H.-J."/>
            <person name="Andrews-Pfannkoch C."/>
            <person name="Baldwin D."/>
            <person name="Ballew R.M."/>
            <person name="Basu A."/>
            <person name="Baxendale J."/>
            <person name="Bayraktaroglu L."/>
            <person name="Beasley E.M."/>
            <person name="Beeson K.Y."/>
            <person name="Benos P.V."/>
            <person name="Berman B.P."/>
            <person name="Bhandari D."/>
            <person name="Bolshakov S."/>
            <person name="Borkova D."/>
            <person name="Botchan M.R."/>
            <person name="Bouck J."/>
            <person name="Brokstein P."/>
            <person name="Brottier P."/>
            <person name="Burtis K.C."/>
            <person name="Busam D.A."/>
            <person name="Butler H."/>
            <person name="Cadieu E."/>
            <person name="Center A."/>
            <person name="Chandra I."/>
            <person name="Cherry J.M."/>
            <person name="Cawley S."/>
            <person name="Dahlke C."/>
            <person name="Davenport L.B."/>
            <person name="Davies P."/>
            <person name="de Pablos B."/>
            <person name="Delcher A."/>
            <person name="Deng Z."/>
            <person name="Mays A.D."/>
            <person name="Dew I."/>
            <person name="Dietz S.M."/>
            <person name="Dodson K."/>
            <person name="Doup L.E."/>
            <person name="Downes M."/>
            <person name="Dugan-Rocha S."/>
            <person name="Dunkov B.C."/>
            <person name="Dunn P."/>
            <person name="Durbin K.J."/>
            <person name="Evangelista C.C."/>
            <person name="Ferraz C."/>
            <person name="Ferriera S."/>
            <person name="Fleischmann W."/>
            <person name="Fosler C."/>
            <person name="Gabrielian A.E."/>
            <person name="Garg N.S."/>
            <person name="Gelbart W.M."/>
            <person name="Glasser K."/>
            <person name="Glodek A."/>
            <person name="Gong F."/>
            <person name="Gorrell J.H."/>
            <person name="Gu Z."/>
            <person name="Guan P."/>
            <person name="Harris M."/>
            <person name="Harris N.L."/>
            <person name="Harvey D.A."/>
            <person name="Heiman T.J."/>
            <person name="Hernandez J.R."/>
            <person name="Houck J."/>
            <person name="Hostin D."/>
            <person name="Houston K.A."/>
            <person name="Howland T.J."/>
            <person name="Wei M.-H."/>
            <person name="Ibegwam C."/>
            <person name="Jalali M."/>
            <person name="Kalush F."/>
            <person name="Karpen G.H."/>
            <person name="Ke Z."/>
            <person name="Kennison J.A."/>
            <person name="Ketchum K.A."/>
            <person name="Kimmel B.E."/>
            <person name="Kodira C.D."/>
            <person name="Kraft C.L."/>
            <person name="Kravitz S."/>
            <person name="Kulp D."/>
            <person name="Lai Z."/>
            <person name="Lasko P."/>
            <person name="Lei Y."/>
            <person name="Levitsky A.A."/>
            <person name="Li J.H."/>
            <person name="Li Z."/>
            <person name="Liang Y."/>
            <person name="Lin X."/>
            <person name="Liu X."/>
            <person name="Mattei B."/>
            <person name="McIntosh T.C."/>
            <person name="McLeod M.P."/>
            <person name="McPherson D."/>
            <person name="Merkulov G."/>
            <person name="Milshina N.V."/>
            <person name="Mobarry C."/>
            <person name="Morris J."/>
            <person name="Moshrefi A."/>
            <person name="Mount S.M."/>
            <person name="Moy M."/>
            <person name="Murphy B."/>
            <person name="Murphy L."/>
            <person name="Muzny D.M."/>
            <person name="Nelson D.L."/>
            <person name="Nelson D.R."/>
            <person name="Nelson K.A."/>
            <person name="Nixon K."/>
            <person name="Nusskern D.R."/>
            <person name="Pacleb J.M."/>
            <person name="Palazzolo M."/>
            <person name="Pittman G.S."/>
            <person name="Pan S."/>
            <person name="Pollard J."/>
            <person name="Puri V."/>
            <person name="Reese M.G."/>
            <person name="Reinert K."/>
            <person name="Remington K."/>
            <person name="Saunders R.D.C."/>
            <person name="Scheeler F."/>
            <person name="Shen H."/>
            <person name="Shue B.C."/>
            <person name="Siden-Kiamos I."/>
            <person name="Simpson M."/>
            <person name="Skupski M.P."/>
            <person name="Smith T.J."/>
            <person name="Spier E."/>
            <person name="Spradling A.C."/>
            <person name="Stapleton M."/>
            <person name="Strong R."/>
            <person name="Sun E."/>
            <person name="Svirskas R."/>
            <person name="Tector C."/>
            <person name="Turner R."/>
            <person name="Venter E."/>
            <person name="Wang A.H."/>
            <person name="Wang X."/>
            <person name="Wang Z.-Y."/>
            <person name="Wassarman D.A."/>
            <person name="Weinstock G.M."/>
            <person name="Weissenbach J."/>
            <person name="Williams S.M."/>
            <person name="Woodage T."/>
            <person name="Worley K.C."/>
            <person name="Wu D."/>
            <person name="Yang S."/>
            <person name="Yao Q.A."/>
            <person name="Ye J."/>
            <person name="Yeh R.-F."/>
            <person name="Zaveri J.S."/>
            <person name="Zhan M."/>
            <person name="Zhang G."/>
            <person name="Zhao Q."/>
            <person name="Zheng L."/>
            <person name="Zheng X.H."/>
            <person name="Zhong F.N."/>
            <person name="Zhong W."/>
            <person name="Zhou X."/>
            <person name="Zhu S.C."/>
            <person name="Zhu X."/>
            <person name="Smith H.O."/>
            <person name="Gibbs R.A."/>
            <person name="Myers E.W."/>
            <person name="Rubin G.M."/>
            <person name="Venter J.C."/>
        </authorList>
    </citation>
    <scope>NUCLEOTIDE SEQUENCE [LARGE SCALE GENOMIC DNA]</scope>
    <source>
        <strain>Berkeley</strain>
    </source>
</reference>
<reference evidence="7" key="3">
    <citation type="journal article" date="2002" name="Genome Biol.">
        <title>Annotation of the Drosophila melanogaster euchromatic genome: a systematic review.</title>
        <authorList>
            <person name="Misra S."/>
            <person name="Crosby M.A."/>
            <person name="Mungall C.J."/>
            <person name="Matthews B.B."/>
            <person name="Campbell K.S."/>
            <person name="Hradecky P."/>
            <person name="Huang Y."/>
            <person name="Kaminker J.S."/>
            <person name="Millburn G.H."/>
            <person name="Prochnik S.E."/>
            <person name="Smith C.D."/>
            <person name="Tupy J.L."/>
            <person name="Whitfield E.J."/>
            <person name="Bayraktaroglu L."/>
            <person name="Berman B.P."/>
            <person name="Bettencourt B.R."/>
            <person name="Celniker S.E."/>
            <person name="de Grey A.D.N.J."/>
            <person name="Drysdale R.A."/>
            <person name="Harris N.L."/>
            <person name="Richter J."/>
            <person name="Russo S."/>
            <person name="Schroeder A.J."/>
            <person name="Shu S.Q."/>
            <person name="Stapleton M."/>
            <person name="Yamada C."/>
            <person name="Ashburner M."/>
            <person name="Gelbart W.M."/>
            <person name="Rubin G.M."/>
            <person name="Lewis S.E."/>
        </authorList>
    </citation>
    <scope>GENOME REANNOTATION</scope>
    <source>
        <strain>Berkeley</strain>
    </source>
</reference>
<reference evidence="8" key="4">
    <citation type="journal article" date="2002" name="Genome Biol.">
        <title>A Drosophila full-length cDNA resource.</title>
        <authorList>
            <person name="Stapleton M."/>
            <person name="Carlson J.W."/>
            <person name="Brokstein P."/>
            <person name="Yu C."/>
            <person name="Champe M."/>
            <person name="George R.A."/>
            <person name="Guarin H."/>
            <person name="Kronmiller B."/>
            <person name="Pacleb J.M."/>
            <person name="Park S."/>
            <person name="Wan K.H."/>
            <person name="Rubin G.M."/>
            <person name="Celniker S.E."/>
        </authorList>
    </citation>
    <scope>NUCLEOTIDE SEQUENCE [LARGE SCALE MRNA]</scope>
    <source>
        <strain evidence="8">Berkeley</strain>
        <tissue evidence="3">Head</tissue>
    </source>
</reference>
<reference evidence="6" key="5">
    <citation type="journal article" date="2013" name="J. Biol. Chem.">
        <title>Ceramide phosphoethanolamine biosynthesis in Drosophila is mediated by a unique ethanolamine phosphotransferase in the Golgi lumen.</title>
        <authorList>
            <person name="Vacaru A.M."/>
            <person name="van den Dikkenberg J."/>
            <person name="Ternes P."/>
            <person name="Holthuis J.C."/>
        </authorList>
    </citation>
    <scope>FUNCTION</scope>
    <scope>CATALYTIC ACTIVITY</scope>
    <scope>COFACTOR</scope>
    <scope>SUBCELLULAR LOCATION</scope>
</reference>
<sequence>MIGPSSQISKILLTLLFLLIIFYVFMDVELYLRIHNYAIERNYHTNVSLPASVVGPSTSESGSGSIGGSSSSSSSSSSSTSTKLPTAGDRQPSYEDHTWISCDINPLCHVTVKAILLDHTNHYLFAPLATMFDNVIGFSRSTFITPNMISFFHVGVACLAGKLVASDSLGYRRLGVLLFQIRTFLDDLDGHVARVRKHIRGERSEIGTSGYYVDGLCDGLGCIALLLGIFFYLKNNPPRRGYSIIPMSDSKLPEPTMMIPKMKATTRKVAKNVISFTGQLLLSSTAWNRYIAVYQNMLEREDVSGNQSHCQDYVFKSTWFFCVAWMWRIVNVHALLHCVLLSIFCDKLWDFLRAIRYSGYIILLVAICLTEMHILEAQNYIFNSTACSNISL</sequence>
<feature type="chain" id="PRO_0000424382" description="Ceramide phosphoethanolamine synthase">
    <location>
        <begin position="1"/>
        <end position="392"/>
    </location>
</feature>
<feature type="topological domain" description="Lumenal" evidence="1">
    <location>
        <begin position="1"/>
        <end position="10"/>
    </location>
</feature>
<feature type="transmembrane region" description="Helical" evidence="1">
    <location>
        <begin position="11"/>
        <end position="31"/>
    </location>
</feature>
<feature type="topological domain" description="Cytoplasmic" evidence="1">
    <location>
        <begin position="32"/>
        <end position="140"/>
    </location>
</feature>
<feature type="transmembrane region" description="Helical" evidence="1">
    <location>
        <begin position="141"/>
        <end position="161"/>
    </location>
</feature>
<feature type="topological domain" description="Lumenal" evidence="1">
    <location>
        <begin position="162"/>
        <end position="212"/>
    </location>
</feature>
<feature type="transmembrane region" description="Helical" evidence="1">
    <location>
        <begin position="213"/>
        <end position="233"/>
    </location>
</feature>
<feature type="topological domain" description="Cytoplasmic" evidence="1">
    <location>
        <begin position="234"/>
        <end position="271"/>
    </location>
</feature>
<feature type="transmembrane region" description="Helical" evidence="1">
    <location>
        <begin position="272"/>
        <end position="288"/>
    </location>
</feature>
<feature type="topological domain" description="Lumenal" evidence="1">
    <location>
        <begin position="289"/>
        <end position="319"/>
    </location>
</feature>
<feature type="transmembrane region" description="Helical" evidence="1">
    <location>
        <begin position="320"/>
        <end position="340"/>
    </location>
</feature>
<feature type="topological domain" description="Cytoplasmic" evidence="1">
    <location>
        <begin position="341"/>
        <end position="356"/>
    </location>
</feature>
<feature type="transmembrane region" description="Helical" evidence="1">
    <location>
        <begin position="357"/>
        <end position="377"/>
    </location>
</feature>
<feature type="topological domain" description="Lumenal" evidence="1">
    <location>
        <begin position="378"/>
        <end position="392"/>
    </location>
</feature>
<feature type="region of interest" description="Disordered" evidence="2">
    <location>
        <begin position="59"/>
        <end position="91"/>
    </location>
</feature>
<feature type="compositionally biased region" description="Low complexity" evidence="2">
    <location>
        <begin position="59"/>
        <end position="82"/>
    </location>
</feature>
<organism>
    <name type="scientific">Drosophila melanogaster</name>
    <name type="common">Fruit fly</name>
    <dbReference type="NCBI Taxonomy" id="7227"/>
    <lineage>
        <taxon>Eukaryota</taxon>
        <taxon>Metazoa</taxon>
        <taxon>Ecdysozoa</taxon>
        <taxon>Arthropoda</taxon>
        <taxon>Hexapoda</taxon>
        <taxon>Insecta</taxon>
        <taxon>Pterygota</taxon>
        <taxon>Neoptera</taxon>
        <taxon>Endopterygota</taxon>
        <taxon>Diptera</taxon>
        <taxon>Brachycera</taxon>
        <taxon>Muscomorpha</taxon>
        <taxon>Ephydroidea</taxon>
        <taxon>Drosophilidae</taxon>
        <taxon>Drosophila</taxon>
        <taxon>Sophophora</taxon>
    </lineage>
</organism>
<dbReference type="EC" id="2.7.8.48"/>
<dbReference type="EMBL" id="AB010261">
    <property type="protein sequence ID" value="BAA32689.1"/>
    <property type="molecule type" value="Genomic_DNA"/>
</dbReference>
<dbReference type="EMBL" id="AB010264">
    <property type="protein sequence ID" value="BAA32692.1"/>
    <property type="molecule type" value="mRNA"/>
</dbReference>
<dbReference type="EMBL" id="AE013599">
    <property type="protein sequence ID" value="AAF47081.1"/>
    <property type="molecule type" value="Genomic_DNA"/>
</dbReference>
<dbReference type="EMBL" id="AY060752">
    <property type="protein sequence ID" value="AAL28300.1"/>
    <property type="molecule type" value="mRNA"/>
</dbReference>
<dbReference type="RefSeq" id="NP_001286788.1">
    <property type="nucleotide sequence ID" value="NM_001299859.1"/>
</dbReference>
<dbReference type="RefSeq" id="NP_001286789.1">
    <property type="nucleotide sequence ID" value="NM_001299860.1"/>
</dbReference>
<dbReference type="RefSeq" id="NP_001286790.1">
    <property type="nucleotide sequence ID" value="NM_001299861.1"/>
</dbReference>
<dbReference type="RefSeq" id="NP_477376.1">
    <property type="nucleotide sequence ID" value="NM_058028.5"/>
</dbReference>
<dbReference type="BioGRID" id="63375">
    <property type="interactions" value="2"/>
</dbReference>
<dbReference type="FunCoup" id="O77475">
    <property type="interactions" value="253"/>
</dbReference>
<dbReference type="STRING" id="7227.FBpp0072136"/>
<dbReference type="PaxDb" id="7227-FBpp0072136"/>
<dbReference type="DNASU" id="37782"/>
<dbReference type="EnsemblMetazoa" id="FBtr0072227">
    <property type="protein sequence ID" value="FBpp0072136"/>
    <property type="gene ID" value="FBgn0025335"/>
</dbReference>
<dbReference type="EnsemblMetazoa" id="FBtr0343275">
    <property type="protein sequence ID" value="FBpp0309940"/>
    <property type="gene ID" value="FBgn0025335"/>
</dbReference>
<dbReference type="EnsemblMetazoa" id="FBtr0343276">
    <property type="protein sequence ID" value="FBpp0309941"/>
    <property type="gene ID" value="FBgn0025335"/>
</dbReference>
<dbReference type="EnsemblMetazoa" id="FBtr0343277">
    <property type="protein sequence ID" value="FBpp0309942"/>
    <property type="gene ID" value="FBgn0025335"/>
</dbReference>
<dbReference type="GeneID" id="37782"/>
<dbReference type="KEGG" id="dme:Dmel_CG4585"/>
<dbReference type="UCSC" id="CG4585-RA">
    <property type="organism name" value="d. melanogaster"/>
</dbReference>
<dbReference type="AGR" id="FB:FBgn0025335"/>
<dbReference type="CTD" id="37782"/>
<dbReference type="FlyBase" id="FBgn0025335">
    <property type="gene designation" value="Cpes"/>
</dbReference>
<dbReference type="VEuPathDB" id="VectorBase:FBgn0025335"/>
<dbReference type="eggNOG" id="ENOG502S0MB">
    <property type="taxonomic scope" value="Eukaryota"/>
</dbReference>
<dbReference type="HOGENOM" id="CLU_060194_0_0_1"/>
<dbReference type="InParanoid" id="O77475"/>
<dbReference type="OMA" id="QYQCQNY"/>
<dbReference type="OrthoDB" id="10253254at2759"/>
<dbReference type="PhylomeDB" id="O77475"/>
<dbReference type="BioCyc" id="MetaCyc:MONOMER-18328"/>
<dbReference type="BRENDA" id="2.7.8.B14">
    <property type="organism ID" value="1994"/>
</dbReference>
<dbReference type="BioGRID-ORCS" id="37782">
    <property type="hits" value="0 hits in 1 CRISPR screen"/>
</dbReference>
<dbReference type="GenomeRNAi" id="37782"/>
<dbReference type="PRO" id="PR:O77475"/>
<dbReference type="Proteomes" id="UP000000803">
    <property type="component" value="Chromosome 2R"/>
</dbReference>
<dbReference type="Bgee" id="FBgn0025335">
    <property type="expression patterns" value="Expressed in adult middle midgut class II enteroendocrine cell in adult midgut (Drosophila) and 105 other cell types or tissues"/>
</dbReference>
<dbReference type="ExpressionAtlas" id="O77475">
    <property type="expression patterns" value="baseline and differential"/>
</dbReference>
<dbReference type="GO" id="GO:0005794">
    <property type="term" value="C:Golgi apparatus"/>
    <property type="evidence" value="ECO:0000314"/>
    <property type="project" value="FlyBase"/>
</dbReference>
<dbReference type="GO" id="GO:0000139">
    <property type="term" value="C:Golgi membrane"/>
    <property type="evidence" value="ECO:0007669"/>
    <property type="project" value="UniProtKB-SubCell"/>
</dbReference>
<dbReference type="GO" id="GO:0005886">
    <property type="term" value="C:plasma membrane"/>
    <property type="evidence" value="ECO:0007669"/>
    <property type="project" value="UniProtKB-SubCell"/>
</dbReference>
<dbReference type="GO" id="GO:0002950">
    <property type="term" value="F:ceramide phosphoethanolamine synthase activity"/>
    <property type="evidence" value="ECO:0000314"/>
    <property type="project" value="FlyBase"/>
</dbReference>
<dbReference type="GO" id="GO:1905373">
    <property type="term" value="P:ceramide phosphoethanolamine biosynthetic process"/>
    <property type="evidence" value="ECO:0000314"/>
    <property type="project" value="FlyBase"/>
</dbReference>
<dbReference type="Gene3D" id="1.20.120.1760">
    <property type="match status" value="1"/>
</dbReference>
<dbReference type="InterPro" id="IPR043130">
    <property type="entry name" value="CDP-OH_PTrfase_TM_dom"/>
</dbReference>
<gene>
    <name evidence="5 10" type="primary">Cpes</name>
    <name evidence="10" type="ORF">CG4585</name>
</gene>
<comment type="function">
    <text evidence="4">Catalyzes the biosynthesis of ceramide phosphoethanolamine (CPE) through the transfer of a phosphatidyl head group from cytidine 5'-diphosphate (CDP)-ethanolamine on to the primary hydroxyl of ceramide.</text>
</comment>
<comment type="catalytic activity">
    <reaction evidence="4">
        <text>CDP-ethanolamine + an N-acylsphing-4-enine = an N-acylsphing-4-enine 1-phosphoethanolamine + CMP + H(+)</text>
        <dbReference type="Rhea" id="RHEA:45892"/>
        <dbReference type="ChEBI" id="CHEBI:15378"/>
        <dbReference type="ChEBI" id="CHEBI:52639"/>
        <dbReference type="ChEBI" id="CHEBI:57876"/>
        <dbReference type="ChEBI" id="CHEBI:60377"/>
        <dbReference type="ChEBI" id="CHEBI:73203"/>
        <dbReference type="EC" id="2.7.8.48"/>
    </reaction>
</comment>
<comment type="catalytic activity">
    <reaction evidence="4">
        <text>CDP-ethanolamine + an N-acyl-sphingoid base = an N-acyl-sphingoid 1-phosphoethanolamine + CMP + H(+)</text>
        <dbReference type="Rhea" id="RHEA:45896"/>
        <dbReference type="ChEBI" id="CHEBI:15378"/>
        <dbReference type="ChEBI" id="CHEBI:57876"/>
        <dbReference type="ChEBI" id="CHEBI:60377"/>
        <dbReference type="ChEBI" id="CHEBI:73202"/>
        <dbReference type="ChEBI" id="CHEBI:83273"/>
        <dbReference type="EC" id="2.7.8.48"/>
    </reaction>
</comment>
<comment type="cofactor">
    <cofactor evidence="4">
        <name>Mn(2+)</name>
        <dbReference type="ChEBI" id="CHEBI:29035"/>
    </cofactor>
</comment>
<comment type="subcellular location">
    <subcellularLocation>
        <location evidence="4">Membrane</location>
        <topology evidence="4">Multi-pass membrane protein</topology>
    </subcellularLocation>
    <subcellularLocation>
        <location evidence="4">Golgi apparatus membrane</location>
    </subcellularLocation>
    <subcellularLocation>
        <location evidence="4">Cell membrane</location>
    </subcellularLocation>
    <text evidence="4">The majority of protein localizes to the Golgi apparatus.</text>
</comment>
<comment type="similarity">
    <text evidence="6">Belongs to the CDP-alcohol phosphatidyltransferase class-I family.</text>
</comment>
<proteinExistence type="evidence at protein level"/>
<evidence type="ECO:0000255" key="1"/>
<evidence type="ECO:0000256" key="2">
    <source>
        <dbReference type="SAM" id="MobiDB-lite"/>
    </source>
</evidence>
<evidence type="ECO:0000269" key="3">
    <source>
    </source>
</evidence>
<evidence type="ECO:0000269" key="4">
    <source>
    </source>
</evidence>
<evidence type="ECO:0000303" key="5">
    <source>
    </source>
</evidence>
<evidence type="ECO:0000305" key="6"/>
<evidence type="ECO:0000312" key="7">
    <source>
        <dbReference type="EMBL" id="AAF47081.1"/>
    </source>
</evidence>
<evidence type="ECO:0000312" key="8">
    <source>
        <dbReference type="EMBL" id="AAL28300.1"/>
    </source>
</evidence>
<evidence type="ECO:0000312" key="9">
    <source>
        <dbReference type="EMBL" id="BAA32689.1"/>
    </source>
</evidence>
<evidence type="ECO:0000312" key="10">
    <source>
        <dbReference type="FlyBase" id="FBgn0025335"/>
    </source>
</evidence>
<protein>
    <recommendedName>
        <fullName evidence="5">Ceramide phosphoethanolamine synthase</fullName>
        <shortName evidence="5">CPE synthase</shortName>
        <ecNumber>2.7.8.48</ecNumber>
    </recommendedName>
</protein>